<comment type="catalytic activity">
    <reaction evidence="1">
        <text>sulfate + ATP + H(+) = adenosine 5'-phosphosulfate + diphosphate</text>
        <dbReference type="Rhea" id="RHEA:18133"/>
        <dbReference type="ChEBI" id="CHEBI:15378"/>
        <dbReference type="ChEBI" id="CHEBI:16189"/>
        <dbReference type="ChEBI" id="CHEBI:30616"/>
        <dbReference type="ChEBI" id="CHEBI:33019"/>
        <dbReference type="ChEBI" id="CHEBI:58243"/>
        <dbReference type="EC" id="2.7.7.4"/>
    </reaction>
</comment>
<comment type="pathway">
    <text evidence="1">Sulfur metabolism; hydrogen sulfide biosynthesis; sulfite from sulfate: step 1/3.</text>
</comment>
<comment type="similarity">
    <text evidence="1">Belongs to the sulfate adenylyltransferase family.</text>
</comment>
<dbReference type="EC" id="2.7.7.4" evidence="1"/>
<dbReference type="EMBL" id="CP001110">
    <property type="protein sequence ID" value="ACF42398.1"/>
    <property type="molecule type" value="Genomic_DNA"/>
</dbReference>
<dbReference type="RefSeq" id="WP_012506896.1">
    <property type="nucleotide sequence ID" value="NC_011060.1"/>
</dbReference>
<dbReference type="SMR" id="B4SAM9"/>
<dbReference type="STRING" id="324925.Ppha_0041"/>
<dbReference type="KEGG" id="pph:Ppha_0041"/>
<dbReference type="eggNOG" id="COG2046">
    <property type="taxonomic scope" value="Bacteria"/>
</dbReference>
<dbReference type="HOGENOM" id="CLU_022950_1_1_10"/>
<dbReference type="OrthoDB" id="9804504at2"/>
<dbReference type="UniPathway" id="UPA00140">
    <property type="reaction ID" value="UER00204"/>
</dbReference>
<dbReference type="Proteomes" id="UP000002724">
    <property type="component" value="Chromosome"/>
</dbReference>
<dbReference type="GO" id="GO:0005524">
    <property type="term" value="F:ATP binding"/>
    <property type="evidence" value="ECO:0007669"/>
    <property type="project" value="UniProtKB-KW"/>
</dbReference>
<dbReference type="GO" id="GO:0004781">
    <property type="term" value="F:sulfate adenylyltransferase (ATP) activity"/>
    <property type="evidence" value="ECO:0007669"/>
    <property type="project" value="UniProtKB-UniRule"/>
</dbReference>
<dbReference type="GO" id="GO:0070814">
    <property type="term" value="P:hydrogen sulfide biosynthetic process"/>
    <property type="evidence" value="ECO:0007669"/>
    <property type="project" value="UniProtKB-UniRule"/>
</dbReference>
<dbReference type="GO" id="GO:0000103">
    <property type="term" value="P:sulfate assimilation"/>
    <property type="evidence" value="ECO:0007669"/>
    <property type="project" value="UniProtKB-UniRule"/>
</dbReference>
<dbReference type="CDD" id="cd00517">
    <property type="entry name" value="ATPS"/>
    <property type="match status" value="1"/>
</dbReference>
<dbReference type="Gene3D" id="3.40.50.620">
    <property type="entry name" value="HUPs"/>
    <property type="match status" value="1"/>
</dbReference>
<dbReference type="Gene3D" id="3.10.400.10">
    <property type="entry name" value="Sulfate adenylyltransferase"/>
    <property type="match status" value="1"/>
</dbReference>
<dbReference type="HAMAP" id="MF_00066">
    <property type="entry name" value="Sulf_adenylyltr"/>
    <property type="match status" value="1"/>
</dbReference>
<dbReference type="InterPro" id="IPR025980">
    <property type="entry name" value="ATP-Sase_PUA-like_dom"/>
</dbReference>
<dbReference type="InterPro" id="IPR015947">
    <property type="entry name" value="PUA-like_sf"/>
</dbReference>
<dbReference type="InterPro" id="IPR014729">
    <property type="entry name" value="Rossmann-like_a/b/a_fold"/>
</dbReference>
<dbReference type="InterPro" id="IPR020792">
    <property type="entry name" value="SO4_adenylyltransferase_pro"/>
</dbReference>
<dbReference type="InterPro" id="IPR024951">
    <property type="entry name" value="Sulfurylase_cat_dom"/>
</dbReference>
<dbReference type="InterPro" id="IPR002650">
    <property type="entry name" value="Sulphate_adenylyltransferase"/>
</dbReference>
<dbReference type="NCBIfam" id="NF003166">
    <property type="entry name" value="PRK04149.1"/>
    <property type="match status" value="1"/>
</dbReference>
<dbReference type="NCBIfam" id="TIGR00339">
    <property type="entry name" value="sopT"/>
    <property type="match status" value="1"/>
</dbReference>
<dbReference type="PANTHER" id="PTHR43509">
    <property type="match status" value="1"/>
</dbReference>
<dbReference type="PANTHER" id="PTHR43509:SF1">
    <property type="entry name" value="SULFATE ADENYLYLTRANSFERASE"/>
    <property type="match status" value="1"/>
</dbReference>
<dbReference type="Pfam" id="PF01747">
    <property type="entry name" value="ATP-sulfurylase"/>
    <property type="match status" value="1"/>
</dbReference>
<dbReference type="Pfam" id="PF14306">
    <property type="entry name" value="PUA_2"/>
    <property type="match status" value="1"/>
</dbReference>
<dbReference type="SUPFAM" id="SSF52374">
    <property type="entry name" value="Nucleotidylyl transferase"/>
    <property type="match status" value="1"/>
</dbReference>
<dbReference type="SUPFAM" id="SSF88697">
    <property type="entry name" value="PUA domain-like"/>
    <property type="match status" value="1"/>
</dbReference>
<name>SAT_PELPB</name>
<feature type="chain" id="PRO_1000092260" description="Sulfate adenylyltransferase">
    <location>
        <begin position="1"/>
        <end position="403"/>
    </location>
</feature>
<protein>
    <recommendedName>
        <fullName evidence="1">Sulfate adenylyltransferase</fullName>
        <ecNumber evidence="1">2.7.7.4</ecNumber>
    </recommendedName>
    <alternativeName>
        <fullName evidence="1">ATP-sulfurylase</fullName>
    </alternativeName>
    <alternativeName>
        <fullName evidence="1">Sulfate adenylate transferase</fullName>
        <shortName evidence="1">SAT</shortName>
    </alternativeName>
</protein>
<keyword id="KW-0067">ATP-binding</keyword>
<keyword id="KW-0547">Nucleotide-binding</keyword>
<keyword id="KW-0548">Nucleotidyltransferase</keyword>
<keyword id="KW-1185">Reference proteome</keyword>
<keyword id="KW-0808">Transferase</keyword>
<gene>
    <name evidence="1" type="primary">sat</name>
    <name type="ordered locus">Ppha_0041</name>
</gene>
<accession>B4SAM9</accession>
<evidence type="ECO:0000255" key="1">
    <source>
        <dbReference type="HAMAP-Rule" id="MF_00066"/>
    </source>
</evidence>
<proteinExistence type="inferred from homology"/>
<reference key="1">
    <citation type="submission" date="2008-06" db="EMBL/GenBank/DDBJ databases">
        <title>Complete sequence of Pelodictyon phaeoclathratiforme BU-1.</title>
        <authorList>
            <consortium name="US DOE Joint Genome Institute"/>
            <person name="Lucas S."/>
            <person name="Copeland A."/>
            <person name="Lapidus A."/>
            <person name="Glavina del Rio T."/>
            <person name="Dalin E."/>
            <person name="Tice H."/>
            <person name="Bruce D."/>
            <person name="Goodwin L."/>
            <person name="Pitluck S."/>
            <person name="Schmutz J."/>
            <person name="Larimer F."/>
            <person name="Land M."/>
            <person name="Hauser L."/>
            <person name="Kyrpides N."/>
            <person name="Mikhailova N."/>
            <person name="Liu Z."/>
            <person name="Li T."/>
            <person name="Zhao F."/>
            <person name="Overmann J."/>
            <person name="Bryant D.A."/>
            <person name="Richardson P."/>
        </authorList>
    </citation>
    <scope>NUCLEOTIDE SEQUENCE [LARGE SCALE GENOMIC DNA]</scope>
    <source>
        <strain>DSM 5477 / BU-1</strain>
    </source>
</reference>
<organism>
    <name type="scientific">Pelodictyon phaeoclathratiforme (strain DSM 5477 / BU-1)</name>
    <dbReference type="NCBI Taxonomy" id="324925"/>
    <lineage>
        <taxon>Bacteria</taxon>
        <taxon>Pseudomonadati</taxon>
        <taxon>Chlorobiota</taxon>
        <taxon>Chlorobiia</taxon>
        <taxon>Chlorobiales</taxon>
        <taxon>Chlorobiaceae</taxon>
        <taxon>Chlorobium/Pelodictyon group</taxon>
        <taxon>Pelodictyon</taxon>
    </lineage>
</organism>
<sequence>MSLVNPHGREKILKPLLLSGQALQNEQERAKSMARVTLSSRETGDLIMLGIGGFTPLSGFMGYEDWKGSVEECKLADGTFWPIPITLSTTKEQADKLKIGAEVALVDEESGETMGSMTIEEKYAIDKSHECREVFKTDDPKHPGVLMVMNQGDVNLGGSVKVFSEGSFPSEFEGIYMTPAQTRKMFEDNGWSTVAAFQTRNPMHRSHEYLVKIAIEICDGVLIHQLLGKLKPGDIPADVRRDCINVLMDNYFVKGTCIQGGYPLDMRYAGPREALLHALFRQNFGCSHLIVGRDHAGVGDYYGPFDAHYIFDQIPKDALETKPLKIDWTFYCYKCDGMASMKTCPHTNEDRLNVSGTKLRKMLSEGEEVPEHFSRPEVLEVLHRYYATLTEKVDIGLQTNTGG</sequence>